<dbReference type="EMBL" id="CP000382">
    <property type="protein sequence ID" value="ABK60878.1"/>
    <property type="molecule type" value="Genomic_DNA"/>
</dbReference>
<dbReference type="RefSeq" id="WP_011721508.1">
    <property type="nucleotide sequence ID" value="NC_008593.1"/>
</dbReference>
<dbReference type="SMR" id="A0PYP8"/>
<dbReference type="STRING" id="386415.NT01CX_1418"/>
<dbReference type="KEGG" id="cno:NT01CX_1418"/>
<dbReference type="eggNOG" id="COG0691">
    <property type="taxonomic scope" value="Bacteria"/>
</dbReference>
<dbReference type="HOGENOM" id="CLU_108953_0_0_9"/>
<dbReference type="Proteomes" id="UP000008220">
    <property type="component" value="Chromosome"/>
</dbReference>
<dbReference type="GO" id="GO:0005829">
    <property type="term" value="C:cytosol"/>
    <property type="evidence" value="ECO:0007669"/>
    <property type="project" value="TreeGrafter"/>
</dbReference>
<dbReference type="GO" id="GO:0003723">
    <property type="term" value="F:RNA binding"/>
    <property type="evidence" value="ECO:0007669"/>
    <property type="project" value="UniProtKB-UniRule"/>
</dbReference>
<dbReference type="GO" id="GO:0070929">
    <property type="term" value="P:trans-translation"/>
    <property type="evidence" value="ECO:0007669"/>
    <property type="project" value="UniProtKB-UniRule"/>
</dbReference>
<dbReference type="CDD" id="cd09294">
    <property type="entry name" value="SmpB"/>
    <property type="match status" value="1"/>
</dbReference>
<dbReference type="Gene3D" id="2.40.280.10">
    <property type="match status" value="1"/>
</dbReference>
<dbReference type="HAMAP" id="MF_00023">
    <property type="entry name" value="SmpB"/>
    <property type="match status" value="1"/>
</dbReference>
<dbReference type="InterPro" id="IPR023620">
    <property type="entry name" value="SmpB"/>
</dbReference>
<dbReference type="InterPro" id="IPR000037">
    <property type="entry name" value="SsrA-bd_prot"/>
</dbReference>
<dbReference type="InterPro" id="IPR020081">
    <property type="entry name" value="SsrA-bd_prot_CS"/>
</dbReference>
<dbReference type="NCBIfam" id="NF003843">
    <property type="entry name" value="PRK05422.1"/>
    <property type="match status" value="1"/>
</dbReference>
<dbReference type="NCBIfam" id="TIGR00086">
    <property type="entry name" value="smpB"/>
    <property type="match status" value="1"/>
</dbReference>
<dbReference type="PANTHER" id="PTHR30308:SF2">
    <property type="entry name" value="SSRA-BINDING PROTEIN"/>
    <property type="match status" value="1"/>
</dbReference>
<dbReference type="PANTHER" id="PTHR30308">
    <property type="entry name" value="TMRNA-BINDING COMPONENT OF TRANS-TRANSLATION TAGGING COMPLEX"/>
    <property type="match status" value="1"/>
</dbReference>
<dbReference type="Pfam" id="PF01668">
    <property type="entry name" value="SmpB"/>
    <property type="match status" value="1"/>
</dbReference>
<dbReference type="SUPFAM" id="SSF74982">
    <property type="entry name" value="Small protein B (SmpB)"/>
    <property type="match status" value="1"/>
</dbReference>
<dbReference type="PROSITE" id="PS01317">
    <property type="entry name" value="SSRP"/>
    <property type="match status" value="1"/>
</dbReference>
<keyword id="KW-0963">Cytoplasm</keyword>
<keyword id="KW-1185">Reference proteome</keyword>
<keyword id="KW-0694">RNA-binding</keyword>
<sequence length="157" mass="17898">MGKKDKKNNTLAQNRKAYHDYFIEETFEAGIALVGTEVKSIRGGKANLKDSYASIRNGEVFVCNMHVSPYEQGNIFNRDPLRERKLLLHKSQINTLLGYTAQQGYTLIPLSLYLKNGRVKVALGVAKGKKNYDKRDAIAAKAAKRDIDRQMKERMRY</sequence>
<organism>
    <name type="scientific">Clostridium novyi (strain NT)</name>
    <dbReference type="NCBI Taxonomy" id="386415"/>
    <lineage>
        <taxon>Bacteria</taxon>
        <taxon>Bacillati</taxon>
        <taxon>Bacillota</taxon>
        <taxon>Clostridia</taxon>
        <taxon>Eubacteriales</taxon>
        <taxon>Clostridiaceae</taxon>
        <taxon>Clostridium</taxon>
    </lineage>
</organism>
<comment type="function">
    <text evidence="1">Required for rescue of stalled ribosomes mediated by trans-translation. Binds to transfer-messenger RNA (tmRNA), required for stable association of tmRNA with ribosomes. tmRNA and SmpB together mimic tRNA shape, replacing the anticodon stem-loop with SmpB. tmRNA is encoded by the ssrA gene; the 2 termini fold to resemble tRNA(Ala) and it encodes a 'tag peptide', a short internal open reading frame. During trans-translation Ala-aminoacylated tmRNA acts like a tRNA, entering the A-site of stalled ribosomes, displacing the stalled mRNA. The ribosome then switches to translate the ORF on the tmRNA; the nascent peptide is terminated with the 'tag peptide' encoded by the tmRNA and targeted for degradation. The ribosome is freed to recommence translation, which seems to be the essential function of trans-translation.</text>
</comment>
<comment type="subcellular location">
    <subcellularLocation>
        <location evidence="1">Cytoplasm</location>
    </subcellularLocation>
    <text evidence="1">The tmRNA-SmpB complex associates with stalled 70S ribosomes.</text>
</comment>
<comment type="similarity">
    <text evidence="1">Belongs to the SmpB family.</text>
</comment>
<protein>
    <recommendedName>
        <fullName evidence="1">SsrA-binding protein</fullName>
    </recommendedName>
    <alternativeName>
        <fullName evidence="1">Small protein B</fullName>
    </alternativeName>
</protein>
<reference key="1">
    <citation type="journal article" date="2006" name="Nat. Biotechnol.">
        <title>The genome and transcriptomes of the anti-tumor agent Clostridium novyi-NT.</title>
        <authorList>
            <person name="Bettegowda C."/>
            <person name="Huang X."/>
            <person name="Lin J."/>
            <person name="Cheong I."/>
            <person name="Kohli M."/>
            <person name="Szabo S.A."/>
            <person name="Zhang X."/>
            <person name="Diaz L.A. Jr."/>
            <person name="Velculescu V.E."/>
            <person name="Parmigiani G."/>
            <person name="Kinzler K.W."/>
            <person name="Vogelstein B."/>
            <person name="Zhou S."/>
        </authorList>
    </citation>
    <scope>NUCLEOTIDE SEQUENCE [LARGE SCALE GENOMIC DNA]</scope>
    <source>
        <strain>NT</strain>
    </source>
</reference>
<accession>A0PYP8</accession>
<proteinExistence type="inferred from homology"/>
<gene>
    <name evidence="1" type="primary">smpB</name>
    <name type="ordered locus">NT01CX_1418</name>
</gene>
<feature type="chain" id="PRO_1000002037" description="SsrA-binding protein">
    <location>
        <begin position="1"/>
        <end position="157"/>
    </location>
</feature>
<name>SSRP_CLONN</name>
<evidence type="ECO:0000255" key="1">
    <source>
        <dbReference type="HAMAP-Rule" id="MF_00023"/>
    </source>
</evidence>